<accession>P0A4E7</accession>
<accession>P37368</accession>
<dbReference type="EC" id="2.7.7.6" evidence="1"/>
<dbReference type="EMBL" id="BX640423">
    <property type="protein sequence ID" value="CAE39798.1"/>
    <property type="molecule type" value="Genomic_DNA"/>
</dbReference>
<dbReference type="RefSeq" id="WP_003806932.1">
    <property type="nucleotide sequence ID" value="NC_002928.3"/>
</dbReference>
<dbReference type="SMR" id="P0A4E7"/>
<dbReference type="KEGG" id="bpa:BPP0057"/>
<dbReference type="HOGENOM" id="CLU_053084_0_1_4"/>
<dbReference type="Proteomes" id="UP000001421">
    <property type="component" value="Chromosome"/>
</dbReference>
<dbReference type="GO" id="GO:0005737">
    <property type="term" value="C:cytoplasm"/>
    <property type="evidence" value="ECO:0007669"/>
    <property type="project" value="UniProtKB-ARBA"/>
</dbReference>
<dbReference type="GO" id="GO:0000428">
    <property type="term" value="C:DNA-directed RNA polymerase complex"/>
    <property type="evidence" value="ECO:0007669"/>
    <property type="project" value="UniProtKB-KW"/>
</dbReference>
<dbReference type="GO" id="GO:0003677">
    <property type="term" value="F:DNA binding"/>
    <property type="evidence" value="ECO:0007669"/>
    <property type="project" value="UniProtKB-UniRule"/>
</dbReference>
<dbReference type="GO" id="GO:0003899">
    <property type="term" value="F:DNA-directed RNA polymerase activity"/>
    <property type="evidence" value="ECO:0007669"/>
    <property type="project" value="UniProtKB-UniRule"/>
</dbReference>
<dbReference type="GO" id="GO:0046983">
    <property type="term" value="F:protein dimerization activity"/>
    <property type="evidence" value="ECO:0007669"/>
    <property type="project" value="InterPro"/>
</dbReference>
<dbReference type="GO" id="GO:0006351">
    <property type="term" value="P:DNA-templated transcription"/>
    <property type="evidence" value="ECO:0007669"/>
    <property type="project" value="UniProtKB-UniRule"/>
</dbReference>
<dbReference type="CDD" id="cd06928">
    <property type="entry name" value="RNAP_alpha_NTD"/>
    <property type="match status" value="1"/>
</dbReference>
<dbReference type="FunFam" id="1.10.150.20:FF:000001">
    <property type="entry name" value="DNA-directed RNA polymerase subunit alpha"/>
    <property type="match status" value="1"/>
</dbReference>
<dbReference type="FunFam" id="2.170.120.12:FF:000001">
    <property type="entry name" value="DNA-directed RNA polymerase subunit alpha"/>
    <property type="match status" value="1"/>
</dbReference>
<dbReference type="Gene3D" id="1.10.150.20">
    <property type="entry name" value="5' to 3' exonuclease, C-terminal subdomain"/>
    <property type="match status" value="1"/>
</dbReference>
<dbReference type="Gene3D" id="2.170.120.12">
    <property type="entry name" value="DNA-directed RNA polymerase, insert domain"/>
    <property type="match status" value="1"/>
</dbReference>
<dbReference type="Gene3D" id="3.30.1360.10">
    <property type="entry name" value="RNA polymerase, RBP11-like subunit"/>
    <property type="match status" value="1"/>
</dbReference>
<dbReference type="HAMAP" id="MF_00059">
    <property type="entry name" value="RNApol_bact_RpoA"/>
    <property type="match status" value="1"/>
</dbReference>
<dbReference type="InterPro" id="IPR011262">
    <property type="entry name" value="DNA-dir_RNA_pol_insert"/>
</dbReference>
<dbReference type="InterPro" id="IPR011263">
    <property type="entry name" value="DNA-dir_RNA_pol_RpoA/D/Rpb3"/>
</dbReference>
<dbReference type="InterPro" id="IPR011773">
    <property type="entry name" value="DNA-dir_RpoA"/>
</dbReference>
<dbReference type="InterPro" id="IPR036603">
    <property type="entry name" value="RBP11-like"/>
</dbReference>
<dbReference type="InterPro" id="IPR011260">
    <property type="entry name" value="RNAP_asu_C"/>
</dbReference>
<dbReference type="InterPro" id="IPR036643">
    <property type="entry name" value="RNApol_insert_sf"/>
</dbReference>
<dbReference type="NCBIfam" id="NF003513">
    <property type="entry name" value="PRK05182.1-2"/>
    <property type="match status" value="1"/>
</dbReference>
<dbReference type="NCBIfam" id="NF003519">
    <property type="entry name" value="PRK05182.2-5"/>
    <property type="match status" value="1"/>
</dbReference>
<dbReference type="NCBIfam" id="TIGR02027">
    <property type="entry name" value="rpoA"/>
    <property type="match status" value="1"/>
</dbReference>
<dbReference type="Pfam" id="PF01000">
    <property type="entry name" value="RNA_pol_A_bac"/>
    <property type="match status" value="1"/>
</dbReference>
<dbReference type="Pfam" id="PF03118">
    <property type="entry name" value="RNA_pol_A_CTD"/>
    <property type="match status" value="1"/>
</dbReference>
<dbReference type="Pfam" id="PF01193">
    <property type="entry name" value="RNA_pol_L"/>
    <property type="match status" value="1"/>
</dbReference>
<dbReference type="SMART" id="SM00662">
    <property type="entry name" value="RPOLD"/>
    <property type="match status" value="1"/>
</dbReference>
<dbReference type="SUPFAM" id="SSF47789">
    <property type="entry name" value="C-terminal domain of RNA polymerase alpha subunit"/>
    <property type="match status" value="1"/>
</dbReference>
<dbReference type="SUPFAM" id="SSF56553">
    <property type="entry name" value="Insert subdomain of RNA polymerase alpha subunit"/>
    <property type="match status" value="1"/>
</dbReference>
<dbReference type="SUPFAM" id="SSF55257">
    <property type="entry name" value="RBP11-like subunits of RNA polymerase"/>
    <property type="match status" value="1"/>
</dbReference>
<gene>
    <name evidence="1" type="primary">rpoA</name>
    <name type="ordered locus">BPP0057</name>
</gene>
<feature type="chain" id="PRO_0000175274" description="DNA-directed RNA polymerase subunit alpha">
    <location>
        <begin position="1"/>
        <end position="328"/>
    </location>
</feature>
<feature type="region of interest" description="Alpha N-terminal domain (alpha-NTD)" evidence="1">
    <location>
        <begin position="1"/>
        <end position="232"/>
    </location>
</feature>
<feature type="region of interest" description="Alpha C-terminal domain (alpha-CTD)" evidence="1">
    <location>
        <begin position="248"/>
        <end position="328"/>
    </location>
</feature>
<reference key="1">
    <citation type="journal article" date="2003" name="Nat. Genet.">
        <title>Comparative analysis of the genome sequences of Bordetella pertussis, Bordetella parapertussis and Bordetella bronchiseptica.</title>
        <authorList>
            <person name="Parkhill J."/>
            <person name="Sebaihia M."/>
            <person name="Preston A."/>
            <person name="Murphy L.D."/>
            <person name="Thomson N.R."/>
            <person name="Harris D.E."/>
            <person name="Holden M.T.G."/>
            <person name="Churcher C.M."/>
            <person name="Bentley S.D."/>
            <person name="Mungall K.L."/>
            <person name="Cerdeno-Tarraga A.-M."/>
            <person name="Temple L."/>
            <person name="James K.D."/>
            <person name="Harris B."/>
            <person name="Quail M.A."/>
            <person name="Achtman M."/>
            <person name="Atkin R."/>
            <person name="Baker S."/>
            <person name="Basham D."/>
            <person name="Bason N."/>
            <person name="Cherevach I."/>
            <person name="Chillingworth T."/>
            <person name="Collins M."/>
            <person name="Cronin A."/>
            <person name="Davis P."/>
            <person name="Doggett J."/>
            <person name="Feltwell T."/>
            <person name="Goble A."/>
            <person name="Hamlin N."/>
            <person name="Hauser H."/>
            <person name="Holroyd S."/>
            <person name="Jagels K."/>
            <person name="Leather S."/>
            <person name="Moule S."/>
            <person name="Norberczak H."/>
            <person name="O'Neil S."/>
            <person name="Ormond D."/>
            <person name="Price C."/>
            <person name="Rabbinowitsch E."/>
            <person name="Rutter S."/>
            <person name="Sanders M."/>
            <person name="Saunders D."/>
            <person name="Seeger K."/>
            <person name="Sharp S."/>
            <person name="Simmonds M."/>
            <person name="Skelton J."/>
            <person name="Squares R."/>
            <person name="Squares S."/>
            <person name="Stevens K."/>
            <person name="Unwin L."/>
            <person name="Whitehead S."/>
            <person name="Barrell B.G."/>
            <person name="Maskell D.J."/>
        </authorList>
    </citation>
    <scope>NUCLEOTIDE SEQUENCE [LARGE SCALE GENOMIC DNA]</scope>
    <source>
        <strain>12822 / ATCC BAA-587 / NCTC 13253</strain>
    </source>
</reference>
<sequence length="328" mass="36159">MSTQGFLKPRSIEVEPVGAHHAKIVMEPFERGYGHTLGNALRRILLSSMTGYAPTEVQMTGVVHEYSTIAGVREDVVDILLNLKGVVFKLHNRDEVTLVLRKNGAGAVVASDIELPHDVEIINPDHLICNLTDAGKIEMQVKVEKGRGYVPGNVRALSEDRTHTIGRIVLDASFSPVRRVSYAVESARVEQRTDLDKLVLDIETNGVISPEEAVRQAARILMDQISVFAALEGAGDAYEPPVRGTPQIDPVLLRPVDDLELTVRSANCLKAENIYYIGDLIQRTENELLKTPNLGRKSLNEIKEVLAARGLTLGMKLENWPPLGLERP</sequence>
<comment type="function">
    <text evidence="1">DNA-dependent RNA polymerase catalyzes the transcription of DNA into RNA using the four ribonucleoside triphosphates as substrates.</text>
</comment>
<comment type="catalytic activity">
    <reaction evidence="1">
        <text>RNA(n) + a ribonucleoside 5'-triphosphate = RNA(n+1) + diphosphate</text>
        <dbReference type="Rhea" id="RHEA:21248"/>
        <dbReference type="Rhea" id="RHEA-COMP:14527"/>
        <dbReference type="Rhea" id="RHEA-COMP:17342"/>
        <dbReference type="ChEBI" id="CHEBI:33019"/>
        <dbReference type="ChEBI" id="CHEBI:61557"/>
        <dbReference type="ChEBI" id="CHEBI:140395"/>
        <dbReference type="EC" id="2.7.7.6"/>
    </reaction>
</comment>
<comment type="subunit">
    <text evidence="1">Homodimer. The RNAP catalytic core consists of 2 alpha, 1 beta, 1 beta' and 1 omega subunit. When a sigma factor is associated with the core the holoenzyme is formed, which can initiate transcription.</text>
</comment>
<comment type="domain">
    <text evidence="1">The N-terminal domain is essential for RNAP assembly and basal transcription, whereas the C-terminal domain is involved in interaction with transcriptional regulators and with upstream promoter elements.</text>
</comment>
<comment type="similarity">
    <text evidence="1">Belongs to the RNA polymerase alpha chain family.</text>
</comment>
<evidence type="ECO:0000255" key="1">
    <source>
        <dbReference type="HAMAP-Rule" id="MF_00059"/>
    </source>
</evidence>
<protein>
    <recommendedName>
        <fullName evidence="1">DNA-directed RNA polymerase subunit alpha</fullName>
        <shortName evidence="1">RNAP subunit alpha</shortName>
        <ecNumber evidence="1">2.7.7.6</ecNumber>
    </recommendedName>
    <alternativeName>
        <fullName evidence="1">RNA polymerase subunit alpha</fullName>
    </alternativeName>
    <alternativeName>
        <fullName evidence="1">Transcriptase subunit alpha</fullName>
    </alternativeName>
</protein>
<organism>
    <name type="scientific">Bordetella parapertussis (strain 12822 / ATCC BAA-587 / NCTC 13253)</name>
    <dbReference type="NCBI Taxonomy" id="257311"/>
    <lineage>
        <taxon>Bacteria</taxon>
        <taxon>Pseudomonadati</taxon>
        <taxon>Pseudomonadota</taxon>
        <taxon>Betaproteobacteria</taxon>
        <taxon>Burkholderiales</taxon>
        <taxon>Alcaligenaceae</taxon>
        <taxon>Bordetella</taxon>
    </lineage>
</organism>
<name>RPOA_BORPA</name>
<keyword id="KW-0240">DNA-directed RNA polymerase</keyword>
<keyword id="KW-0548">Nucleotidyltransferase</keyword>
<keyword id="KW-0804">Transcription</keyword>
<keyword id="KW-0808">Transferase</keyword>
<proteinExistence type="inferred from homology"/>